<sequence length="633" mass="70128">MHRFLVKLSSSSSPFSNQLRSLKNQRLILPLLPSSKPFTSSSVSPPPSPLNASNRFGYPYSADLFRNLSPLNPNSRILGVNGITSSRCISSEAVRESIEYDVLIVGAGPAGLSAAIRLKQLSQEKNIDLSVCVVEKGAEVGGHIISGNVFEPLALDELLPHWRQEHAPIEIPASSDKFWFLTKDRAFSLPSPFDNKGNYVISLSQLVRWLGGKAEELGTEIYPGFSASEVLFDASDKVVGIATKDMGISKDGSKKENFQPGVDIKGRVTLFAEGCRGSLSERIIKKYKLREEVNAQHQTYALGIKEVWEIDESKHNPGEVIHTLGWPLDPKTYGGSFLYHMNDRQVALGLVVALNYHNPFLNPYEEFQKLKHHPAIKGILEGGTVLQYGARTLNEGGFQSIPYPVFPGGAIIGCSAGFLNVPKIKGTHTAMKSGMLAAEAAFGALHEGLNMNTYWDNLRDSWVWKELYAARNYRPAFEYGLLPGLAISAMEHYVLKGKVPFTLKHGKADHEATDLARKWTPIVYPKPDGVLSFDVPTSLYRSNTNHDHDQPSHLRLRDPKIPEKVNFPEYAAPESRYCPARVYEYIEDEEGKPKLQINAQNCLHCKACDIKDPKQNIEWTVPEGGGGPAYSLM</sequence>
<dbReference type="EC" id="1.5.5.1"/>
<dbReference type="EMBL" id="AC002335">
    <property type="protein sequence ID" value="AAB64328.1"/>
    <property type="molecule type" value="Genomic_DNA"/>
</dbReference>
<dbReference type="EMBL" id="CP002685">
    <property type="protein sequence ID" value="AEC10261.1"/>
    <property type="molecule type" value="Genomic_DNA"/>
</dbReference>
<dbReference type="EMBL" id="BX819708">
    <property type="status" value="NOT_ANNOTATED_CDS"/>
    <property type="molecule type" value="mRNA"/>
</dbReference>
<dbReference type="PIR" id="F84865">
    <property type="entry name" value="F84865"/>
</dbReference>
<dbReference type="RefSeq" id="NP_181868.1">
    <property type="nucleotide sequence ID" value="NM_129901.4"/>
</dbReference>
<dbReference type="SMR" id="O22854"/>
<dbReference type="FunCoup" id="O22854">
    <property type="interactions" value="3606"/>
</dbReference>
<dbReference type="STRING" id="3702.O22854"/>
<dbReference type="PaxDb" id="3702-AT2G43400.1"/>
<dbReference type="ProteomicsDB" id="222326"/>
<dbReference type="EnsemblPlants" id="AT2G43400.1">
    <property type="protein sequence ID" value="AT2G43400.1"/>
    <property type="gene ID" value="AT2G43400"/>
</dbReference>
<dbReference type="GeneID" id="818941"/>
<dbReference type="Gramene" id="AT2G43400.1">
    <property type="protein sequence ID" value="AT2G43400.1"/>
    <property type="gene ID" value="AT2G43400"/>
</dbReference>
<dbReference type="KEGG" id="ath:AT2G43400"/>
<dbReference type="Araport" id="AT2G43400"/>
<dbReference type="TAIR" id="AT2G43400">
    <property type="gene designation" value="ETFQO"/>
</dbReference>
<dbReference type="eggNOG" id="KOG2415">
    <property type="taxonomic scope" value="Eukaryota"/>
</dbReference>
<dbReference type="HOGENOM" id="CLU_009667_4_1_1"/>
<dbReference type="InParanoid" id="O22854"/>
<dbReference type="OrthoDB" id="437331at2759"/>
<dbReference type="PhylomeDB" id="O22854"/>
<dbReference type="BioCyc" id="ARA:AT2G43400-MONOMER"/>
<dbReference type="PRO" id="PR:O22854"/>
<dbReference type="Proteomes" id="UP000006548">
    <property type="component" value="Chromosome 2"/>
</dbReference>
<dbReference type="ExpressionAtlas" id="O22854">
    <property type="expression patterns" value="baseline and differential"/>
</dbReference>
<dbReference type="GO" id="GO:0005829">
    <property type="term" value="C:cytosol"/>
    <property type="evidence" value="ECO:0007005"/>
    <property type="project" value="TAIR"/>
</dbReference>
<dbReference type="GO" id="GO:0005743">
    <property type="term" value="C:mitochondrial inner membrane"/>
    <property type="evidence" value="ECO:0007669"/>
    <property type="project" value="UniProtKB-SubCell"/>
</dbReference>
<dbReference type="GO" id="GO:0005739">
    <property type="term" value="C:mitochondrion"/>
    <property type="evidence" value="ECO:0000314"/>
    <property type="project" value="TAIR"/>
</dbReference>
<dbReference type="GO" id="GO:0051539">
    <property type="term" value="F:4 iron, 4 sulfur cluster binding"/>
    <property type="evidence" value="ECO:0007669"/>
    <property type="project" value="UniProtKB-KW"/>
</dbReference>
<dbReference type="GO" id="GO:0004174">
    <property type="term" value="F:electron-transferring-flavoprotein dehydrogenase activity"/>
    <property type="evidence" value="ECO:0007669"/>
    <property type="project" value="UniProtKB-EC"/>
</dbReference>
<dbReference type="GO" id="GO:0046872">
    <property type="term" value="F:metal ion binding"/>
    <property type="evidence" value="ECO:0007669"/>
    <property type="project" value="UniProtKB-KW"/>
</dbReference>
<dbReference type="GO" id="GO:0010230">
    <property type="term" value="P:alternative respiration"/>
    <property type="evidence" value="ECO:0000315"/>
    <property type="project" value="TAIR"/>
</dbReference>
<dbReference type="GO" id="GO:0006552">
    <property type="term" value="P:L-leucine catabolic process"/>
    <property type="evidence" value="ECO:0000315"/>
    <property type="project" value="TAIR"/>
</dbReference>
<dbReference type="GO" id="GO:0009646">
    <property type="term" value="P:response to absence of light"/>
    <property type="evidence" value="ECO:0000270"/>
    <property type="project" value="TAIR"/>
</dbReference>
<dbReference type="FunFam" id="3.30.70.20:FF:000015">
    <property type="entry name" value="Electron transfer flavoprotein-ubiquinone oxidoreductase"/>
    <property type="match status" value="1"/>
</dbReference>
<dbReference type="Gene3D" id="3.30.70.20">
    <property type="match status" value="1"/>
</dbReference>
<dbReference type="Gene3D" id="3.30.9.90">
    <property type="match status" value="1"/>
</dbReference>
<dbReference type="Gene3D" id="3.50.50.60">
    <property type="entry name" value="FAD/NAD(P)-binding domain"/>
    <property type="match status" value="1"/>
</dbReference>
<dbReference type="InterPro" id="IPR040156">
    <property type="entry name" value="ETF-QO"/>
</dbReference>
<dbReference type="InterPro" id="IPR049398">
    <property type="entry name" value="ETF-QO/FixC_UQ-bd"/>
</dbReference>
<dbReference type="InterPro" id="IPR007859">
    <property type="entry name" value="ETF-QO/FixX_C"/>
</dbReference>
<dbReference type="InterPro" id="IPR036188">
    <property type="entry name" value="FAD/NAD-bd_sf"/>
</dbReference>
<dbReference type="PANTHER" id="PTHR10617">
    <property type="entry name" value="ELECTRON TRANSFER FLAVOPROTEIN-UBIQUINONE OXIDOREDUCTASE"/>
    <property type="match status" value="1"/>
</dbReference>
<dbReference type="PANTHER" id="PTHR10617:SF107">
    <property type="entry name" value="ELECTRON TRANSFER FLAVOPROTEIN-UBIQUINONE OXIDOREDUCTASE, MITOCHONDRIAL"/>
    <property type="match status" value="1"/>
</dbReference>
<dbReference type="Pfam" id="PF21162">
    <property type="entry name" value="ETFQO_UQ-bd"/>
    <property type="match status" value="1"/>
</dbReference>
<dbReference type="Pfam" id="PF05187">
    <property type="entry name" value="Fer4_ETF_QO"/>
    <property type="match status" value="1"/>
</dbReference>
<dbReference type="Pfam" id="PF13450">
    <property type="entry name" value="NAD_binding_8"/>
    <property type="match status" value="1"/>
</dbReference>
<dbReference type="SUPFAM" id="SSF54862">
    <property type="entry name" value="4Fe-4S ferredoxins"/>
    <property type="match status" value="1"/>
</dbReference>
<dbReference type="SUPFAM" id="SSF54373">
    <property type="entry name" value="FAD-linked reductases, C-terminal domain"/>
    <property type="match status" value="1"/>
</dbReference>
<dbReference type="SUPFAM" id="SSF51905">
    <property type="entry name" value="FAD/NAD(P)-binding domain"/>
    <property type="match status" value="1"/>
</dbReference>
<evidence type="ECO:0000250" key="1"/>
<evidence type="ECO:0000255" key="2"/>
<evidence type="ECO:0000269" key="3">
    <source>
    </source>
</evidence>
<evidence type="ECO:0000269" key="4">
    <source>
    </source>
</evidence>
<evidence type="ECO:0000269" key="5">
    <source>
    </source>
</evidence>
<evidence type="ECO:0000305" key="6"/>
<evidence type="ECO:0000305" key="7">
    <source>
    </source>
</evidence>
<keyword id="KW-0004">4Fe-4S</keyword>
<keyword id="KW-0249">Electron transport</keyword>
<keyword id="KW-0274">FAD</keyword>
<keyword id="KW-0285">Flavoprotein</keyword>
<keyword id="KW-0408">Iron</keyword>
<keyword id="KW-0411">Iron-sulfur</keyword>
<keyword id="KW-0472">Membrane</keyword>
<keyword id="KW-0479">Metal-binding</keyword>
<keyword id="KW-0496">Mitochondrion</keyword>
<keyword id="KW-0999">Mitochondrion inner membrane</keyword>
<keyword id="KW-0560">Oxidoreductase</keyword>
<keyword id="KW-1185">Reference proteome</keyword>
<keyword id="KW-0809">Transit peptide</keyword>
<keyword id="KW-0813">Transport</keyword>
<keyword id="KW-0830">Ubiquinone</keyword>
<reference key="1">
    <citation type="journal article" date="1999" name="Nature">
        <title>Sequence and analysis of chromosome 2 of the plant Arabidopsis thaliana.</title>
        <authorList>
            <person name="Lin X."/>
            <person name="Kaul S."/>
            <person name="Rounsley S.D."/>
            <person name="Shea T.P."/>
            <person name="Benito M.-I."/>
            <person name="Town C.D."/>
            <person name="Fujii C.Y."/>
            <person name="Mason T.M."/>
            <person name="Bowman C.L."/>
            <person name="Barnstead M.E."/>
            <person name="Feldblyum T.V."/>
            <person name="Buell C.R."/>
            <person name="Ketchum K.A."/>
            <person name="Lee J.J."/>
            <person name="Ronning C.M."/>
            <person name="Koo H.L."/>
            <person name="Moffat K.S."/>
            <person name="Cronin L.A."/>
            <person name="Shen M."/>
            <person name="Pai G."/>
            <person name="Van Aken S."/>
            <person name="Umayam L."/>
            <person name="Tallon L.J."/>
            <person name="Gill J.E."/>
            <person name="Adams M.D."/>
            <person name="Carrera A.J."/>
            <person name="Creasy T.H."/>
            <person name="Goodman H.M."/>
            <person name="Somerville C.R."/>
            <person name="Copenhaver G.P."/>
            <person name="Preuss D."/>
            <person name="Nierman W.C."/>
            <person name="White O."/>
            <person name="Eisen J.A."/>
            <person name="Salzberg S.L."/>
            <person name="Fraser C.M."/>
            <person name="Venter J.C."/>
        </authorList>
    </citation>
    <scope>NUCLEOTIDE SEQUENCE [LARGE SCALE GENOMIC DNA]</scope>
    <source>
        <strain>cv. Columbia</strain>
    </source>
</reference>
<reference key="2">
    <citation type="journal article" date="2017" name="Plant J.">
        <title>Araport11: a complete reannotation of the Arabidopsis thaliana reference genome.</title>
        <authorList>
            <person name="Cheng C.Y."/>
            <person name="Krishnakumar V."/>
            <person name="Chan A.P."/>
            <person name="Thibaud-Nissen F."/>
            <person name="Schobel S."/>
            <person name="Town C.D."/>
        </authorList>
    </citation>
    <scope>GENOME REANNOTATION</scope>
    <source>
        <strain>cv. Columbia</strain>
    </source>
</reference>
<reference key="3">
    <citation type="journal article" date="2004" name="Genome Res.">
        <title>Whole genome sequence comparisons and 'full-length' cDNA sequences: a combined approach to evaluate and improve Arabidopsis genome annotation.</title>
        <authorList>
            <person name="Castelli V."/>
            <person name="Aury J.-M."/>
            <person name="Jaillon O."/>
            <person name="Wincker P."/>
            <person name="Clepet C."/>
            <person name="Menard M."/>
            <person name="Cruaud C."/>
            <person name="Quetier F."/>
            <person name="Scarpelli C."/>
            <person name="Schaechter V."/>
            <person name="Temple G."/>
            <person name="Caboche M."/>
            <person name="Weissenbach J."/>
            <person name="Salanoubat M."/>
        </authorList>
    </citation>
    <scope>NUCLEOTIDE SEQUENCE [LARGE SCALE MRNA]</scope>
    <source>
        <strain>cv. Columbia</strain>
    </source>
</reference>
<reference key="4">
    <citation type="journal article" date="2005" name="Plant Cell">
        <title>The critical role of Arabidopsis electron-transfer flavoprotein:ubiquinone oxidoreductase during dark-induced starvation.</title>
        <authorList>
            <person name="Ishizaki K."/>
            <person name="Larson T.R."/>
            <person name="Schauer N."/>
            <person name="Fernie A.R."/>
            <person name="Graham I.A."/>
            <person name="Leaver C.J."/>
        </authorList>
    </citation>
    <scope>FUNCTION</scope>
    <scope>SUBCELLULAR LOCATION</scope>
    <scope>INDUCTION</scope>
    <scope>DISRUPTION PHENOTYPE</scope>
</reference>
<reference key="5">
    <citation type="journal article" date="2010" name="Plant Cell">
        <title>Identification of the 2-hydroxyglutarate and isovaleryl-CoA dehydrogenases as alternative electron donors linking lysine catabolism to the electron transport chain of Arabidopsis mitochondria.</title>
        <authorList>
            <person name="Araujo W.L."/>
            <person name="Ishizaki K."/>
            <person name="Nunes-Nesi A."/>
            <person name="Larson T.R."/>
            <person name="Tohge T."/>
            <person name="Krahnert I."/>
            <person name="Witt S."/>
            <person name="Obata T."/>
            <person name="Schauer N."/>
            <person name="Graham I.A."/>
            <person name="Leaver C.J."/>
            <person name="Fernie A.R."/>
        </authorList>
    </citation>
    <scope>FUNCTION</scope>
</reference>
<reference key="6">
    <citation type="journal article" date="2018" name="Plant Cell">
        <title>Snf1-RELATED KINASE1-controlled C/S1-bZIP signaling activates alternative mitochondrial metabolic pathways to ensure plant survival in extended darkness.</title>
        <authorList>
            <person name="Pedrotti L."/>
            <person name="Weiste C."/>
            <person name="Naegele T."/>
            <person name="Wolf E."/>
            <person name="Lorenzin F."/>
            <person name="Dietrich K."/>
            <person name="Mair A."/>
            <person name="Weckwerth W."/>
            <person name="Teige M."/>
            <person name="Baena-Gonzalez E."/>
            <person name="Droege-Laser W."/>
        </authorList>
    </citation>
    <scope>ACTIVITY REGULATION</scope>
</reference>
<proteinExistence type="evidence at transcript level"/>
<accession>O22854</accession>
<protein>
    <recommendedName>
        <fullName>Electron transfer flavoprotein-ubiquinone oxidoreductase, mitochondrial</fullName>
        <shortName>ETF-QO</shortName>
        <shortName>ETF-ubiquinone oxidoreductase</shortName>
        <ecNumber>1.5.5.1</ecNumber>
    </recommendedName>
</protein>
<feature type="transit peptide" description="Mitochondrion" evidence="2">
    <location>
        <begin position="1"/>
        <end position="90"/>
    </location>
</feature>
<feature type="chain" id="PRO_0000424901" description="Electron transfer flavoprotein-ubiquinone oxidoreductase, mitochondrial">
    <location>
        <begin position="91"/>
        <end position="633"/>
    </location>
</feature>
<feature type="intramembrane region" evidence="1">
    <location>
        <begin position="140"/>
        <end position="161"/>
    </location>
</feature>
<feature type="intramembrane region" evidence="2">
    <location>
        <begin position="401"/>
        <end position="421"/>
    </location>
</feature>
<feature type="domain" description="4Fe-4S ferredoxin-type">
    <location>
        <begin position="593"/>
        <end position="622"/>
    </location>
</feature>
<feature type="binding site" evidence="2">
    <location>
        <begin position="102"/>
        <end position="116"/>
    </location>
    <ligand>
        <name>FAD</name>
        <dbReference type="ChEBI" id="CHEBI:57692"/>
    </ligand>
</feature>
<feature type="binding site" evidence="1">
    <location>
        <position position="334"/>
    </location>
    <ligand>
        <name>a ubiquinone</name>
        <dbReference type="ChEBI" id="CHEBI:16389"/>
    </ligand>
</feature>
<feature type="binding site" evidence="1">
    <location>
        <position position="335"/>
    </location>
    <ligand>
        <name>a ubiquinone</name>
        <dbReference type="ChEBI" id="CHEBI:16389"/>
    </ligand>
</feature>
<feature type="binding site" evidence="2">
    <location>
        <position position="578"/>
    </location>
    <ligand>
        <name>[4Fe-4S] cluster</name>
        <dbReference type="ChEBI" id="CHEBI:49883"/>
    </ligand>
</feature>
<feature type="binding site" evidence="2">
    <location>
        <position position="602"/>
    </location>
    <ligand>
        <name>[4Fe-4S] cluster</name>
        <dbReference type="ChEBI" id="CHEBI:49883"/>
    </ligand>
</feature>
<feature type="binding site" evidence="2">
    <location>
        <position position="605"/>
    </location>
    <ligand>
        <name>[4Fe-4S] cluster</name>
        <dbReference type="ChEBI" id="CHEBI:49883"/>
    </ligand>
</feature>
<feature type="binding site" evidence="2">
    <location>
        <position position="608"/>
    </location>
    <ligand>
        <name>[4Fe-4S] cluster</name>
        <dbReference type="ChEBI" id="CHEBI:49883"/>
    </ligand>
</feature>
<organism>
    <name type="scientific">Arabidopsis thaliana</name>
    <name type="common">Mouse-ear cress</name>
    <dbReference type="NCBI Taxonomy" id="3702"/>
    <lineage>
        <taxon>Eukaryota</taxon>
        <taxon>Viridiplantae</taxon>
        <taxon>Streptophyta</taxon>
        <taxon>Embryophyta</taxon>
        <taxon>Tracheophyta</taxon>
        <taxon>Spermatophyta</taxon>
        <taxon>Magnoliopsida</taxon>
        <taxon>eudicotyledons</taxon>
        <taxon>Gunneridae</taxon>
        <taxon>Pentapetalae</taxon>
        <taxon>rosids</taxon>
        <taxon>malvids</taxon>
        <taxon>Brassicales</taxon>
        <taxon>Brassicaceae</taxon>
        <taxon>Camelineae</taxon>
        <taxon>Arabidopsis</taxon>
    </lineage>
</organism>
<name>ETFQO_ARATH</name>
<comment type="function">
    <text evidence="3 4">Accepts electrons from ETF and reduces ubiquinone. May act downstream of IVD and D2HGDH in the degradation of phytol or chlorophyll during dark-induced senescence and sugar starvation.</text>
</comment>
<comment type="catalytic activity">
    <reaction>
        <text>a ubiquinone + reduced [electron-transfer flavoprotein] = a ubiquinol + oxidized [electron-transfer flavoprotein] + H(+)</text>
        <dbReference type="Rhea" id="RHEA:24052"/>
        <dbReference type="Rhea" id="RHEA-COMP:9565"/>
        <dbReference type="Rhea" id="RHEA-COMP:9566"/>
        <dbReference type="Rhea" id="RHEA-COMP:10685"/>
        <dbReference type="Rhea" id="RHEA-COMP:10686"/>
        <dbReference type="ChEBI" id="CHEBI:15378"/>
        <dbReference type="ChEBI" id="CHEBI:16389"/>
        <dbReference type="ChEBI" id="CHEBI:17976"/>
        <dbReference type="ChEBI" id="CHEBI:57692"/>
        <dbReference type="ChEBI" id="CHEBI:58307"/>
        <dbReference type="EC" id="1.5.5.1"/>
    </reaction>
</comment>
<comment type="cofactor">
    <cofactor evidence="1">
        <name>[4Fe-4S] cluster</name>
        <dbReference type="ChEBI" id="CHEBI:49883"/>
    </cofactor>
    <text evidence="1">Binds 1 [4Fe-4S] cluster.</text>
</comment>
<comment type="cofactor">
    <cofactor evidence="1">
        <name>FAD</name>
        <dbReference type="ChEBI" id="CHEBI:57692"/>
    </cofactor>
</comment>
<comment type="activity regulation">
    <text evidence="5">Up-regulated by KIN10, by S1-bZIP specific dimers, and also by C/S1 bZIP heterodimers.</text>
</comment>
<comment type="subcellular location">
    <subcellularLocation>
        <location evidence="7">Mitochondrion inner membrane</location>
    </subcellularLocation>
</comment>
<comment type="induction">
    <text evidence="3">By dark-induced senescence.</text>
</comment>
<comment type="disruption phenotype">
    <text evidence="3">Accelerated senescence and short siliques with reduced seed number.</text>
</comment>
<comment type="similarity">
    <text evidence="6">Belongs to the ETF-QO/FixC family.</text>
</comment>
<comment type="sequence caution" evidence="6">
    <conflict type="miscellaneous discrepancy">
        <sequence resource="EMBL" id="BX819708"/>
    </conflict>
    <text>Sequencing errors.</text>
</comment>
<gene>
    <name type="primary">ETFQO</name>
    <name type="ordered locus">At2g43400</name>
    <name type="ORF">T1O24</name>
</gene>